<organism>
    <name type="scientific">Canis lupus familiaris</name>
    <name type="common">Dog</name>
    <name type="synonym">Canis familiaris</name>
    <dbReference type="NCBI Taxonomy" id="9615"/>
    <lineage>
        <taxon>Eukaryota</taxon>
        <taxon>Metazoa</taxon>
        <taxon>Chordata</taxon>
        <taxon>Craniata</taxon>
        <taxon>Vertebrata</taxon>
        <taxon>Euteleostomi</taxon>
        <taxon>Mammalia</taxon>
        <taxon>Eutheria</taxon>
        <taxon>Laurasiatheria</taxon>
        <taxon>Carnivora</taxon>
        <taxon>Caniformia</taxon>
        <taxon>Canidae</taxon>
        <taxon>Canis</taxon>
    </lineage>
</organism>
<protein>
    <recommendedName>
        <fullName>Interleukin-8</fullName>
        <shortName>IL-8</shortName>
    </recommendedName>
    <alternativeName>
        <fullName>C-X-C motif chemokine 8</fullName>
    </alternativeName>
    <alternativeName>
        <fullName>Chemokine (C-X-C motif) ligand 8</fullName>
    </alternativeName>
</protein>
<comment type="function">
    <text evidence="2">Chemotactic factor that mediates inflammatory response by attracting neutrophils, basophils, and T-cells to clear pathogens and protect the host from infection. Also plays an important role in neutrophil activation. Released in response to an inflammatory stimulus, exerts its effect by binding to the G-protein-coupled receptors CXCR1 and CXCR2, primarily found in neutrophils, monocytes and endothelial cells. G-protein heterotrimer (alpha, beta, gamma subunits) constitutively binds to CXCR1/CXCR2 receptor and activation by IL8 leads to beta and gamma subunits release from Galpha (GNAI2 in neutrophils) and activation of several downstream signaling pathways including PI3K and MAPK pathways.</text>
</comment>
<comment type="subunit">
    <text evidence="2">Homodimer. Interacts with TNFAIP6 (via Link domain); this interaction interferes with chemokine binding to glycosaminoglycans.</text>
</comment>
<comment type="subcellular location">
    <subcellularLocation>
        <location>Secreted</location>
    </subcellularLocation>
</comment>
<comment type="PTM">
    <text evidence="1">Citrullination at Arg-27 prevents proteolysis, and dampens tissue inflammation, it also enhances leukocytosis, possibly through impaired chemokine clearance from the blood circulation.</text>
</comment>
<comment type="similarity">
    <text evidence="3">Belongs to the intercrine alpha (chemokine CxC) family.</text>
</comment>
<feature type="signal peptide" evidence="1">
    <location>
        <begin position="1"/>
        <end position="22"/>
    </location>
</feature>
<feature type="chain" id="PRO_0000005121" description="Interleukin-8">
    <location>
        <begin position="23"/>
        <end position="101"/>
    </location>
</feature>
<feature type="modified residue" description="Citrulline" evidence="1">
    <location>
        <position position="27"/>
    </location>
</feature>
<feature type="disulfide bond" evidence="1">
    <location>
        <begin position="34"/>
        <end position="61"/>
    </location>
</feature>
<feature type="disulfide bond" evidence="1">
    <location>
        <begin position="36"/>
        <end position="77"/>
    </location>
</feature>
<keyword id="KW-0145">Chemotaxis</keyword>
<keyword id="KW-0164">Citrullination</keyword>
<keyword id="KW-0202">Cytokine</keyword>
<keyword id="KW-1015">Disulfide bond</keyword>
<keyword id="KW-0395">Inflammatory response</keyword>
<keyword id="KW-1185">Reference proteome</keyword>
<keyword id="KW-0964">Secreted</keyword>
<keyword id="KW-0732">Signal</keyword>
<name>IL8_CANLF</name>
<proteinExistence type="inferred from homology"/>
<accession>P41324</accession>
<evidence type="ECO:0000250" key="1"/>
<evidence type="ECO:0000250" key="2">
    <source>
        <dbReference type="UniProtKB" id="P10145"/>
    </source>
</evidence>
<evidence type="ECO:0000305" key="3"/>
<dbReference type="EMBL" id="D28772">
    <property type="protein sequence ID" value="BAA05961.1"/>
    <property type="molecule type" value="mRNA"/>
</dbReference>
<dbReference type="EMBL" id="D14285">
    <property type="protein sequence ID" value="BAA03246.1"/>
    <property type="molecule type" value="Genomic_DNA"/>
</dbReference>
<dbReference type="EMBL" id="U10308">
    <property type="protein sequence ID" value="AAC48434.1"/>
    <property type="molecule type" value="mRNA"/>
</dbReference>
<dbReference type="EMBL" id="AF048717">
    <property type="protein sequence ID" value="AAC05134.1"/>
    <property type="molecule type" value="mRNA"/>
</dbReference>
<dbReference type="PIR" id="JN0841">
    <property type="entry name" value="JN0841"/>
</dbReference>
<dbReference type="RefSeq" id="NP_001003200.1">
    <property type="nucleotide sequence ID" value="NM_001003200.1"/>
</dbReference>
<dbReference type="SMR" id="P41324"/>
<dbReference type="FunCoup" id="P41324">
    <property type="interactions" value="383"/>
</dbReference>
<dbReference type="STRING" id="9615.ENSCAFP00000004516"/>
<dbReference type="PaxDb" id="9612-ENSCAFP00000004516"/>
<dbReference type="Ensembl" id="ENSCAFT00040014293.1">
    <property type="protein sequence ID" value="ENSCAFP00040012366.1"/>
    <property type="gene ID" value="ENSCAFG00040007673.1"/>
</dbReference>
<dbReference type="GeneID" id="403850"/>
<dbReference type="KEGG" id="cfa:403850"/>
<dbReference type="CTD" id="3576"/>
<dbReference type="eggNOG" id="ENOG502S7MM">
    <property type="taxonomic scope" value="Eukaryota"/>
</dbReference>
<dbReference type="HOGENOM" id="CLU_143902_3_0_1"/>
<dbReference type="InParanoid" id="P41324"/>
<dbReference type="OMA" id="IGTELRC"/>
<dbReference type="OrthoDB" id="9937393at2759"/>
<dbReference type="TreeFam" id="TF333433"/>
<dbReference type="Reactome" id="R-CFA-375276">
    <property type="pathway name" value="Peptide ligand-binding receptors"/>
</dbReference>
<dbReference type="Reactome" id="R-CFA-380108">
    <property type="pathway name" value="Chemokine receptors bind chemokines"/>
</dbReference>
<dbReference type="Reactome" id="R-CFA-418594">
    <property type="pathway name" value="G alpha (i) signalling events"/>
</dbReference>
<dbReference type="Proteomes" id="UP000002254">
    <property type="component" value="Unplaced"/>
</dbReference>
<dbReference type="Proteomes" id="UP000694429">
    <property type="component" value="Unplaced"/>
</dbReference>
<dbReference type="Proteomes" id="UP000694542">
    <property type="component" value="Chromosome 13"/>
</dbReference>
<dbReference type="Proteomes" id="UP000805418">
    <property type="component" value="Unplaced"/>
</dbReference>
<dbReference type="GO" id="GO:0005615">
    <property type="term" value="C:extracellular space"/>
    <property type="evidence" value="ECO:0000318"/>
    <property type="project" value="GO_Central"/>
</dbReference>
<dbReference type="GO" id="GO:0008009">
    <property type="term" value="F:chemokine activity"/>
    <property type="evidence" value="ECO:0000318"/>
    <property type="project" value="GO_Central"/>
</dbReference>
<dbReference type="GO" id="GO:0045236">
    <property type="term" value="F:CXCR chemokine receptor binding"/>
    <property type="evidence" value="ECO:0000318"/>
    <property type="project" value="GO_Central"/>
</dbReference>
<dbReference type="GO" id="GO:0008201">
    <property type="term" value="F:heparin binding"/>
    <property type="evidence" value="ECO:0000250"/>
    <property type="project" value="UniProtKB"/>
</dbReference>
<dbReference type="GO" id="GO:0061844">
    <property type="term" value="P:antimicrobial humoral immune response mediated by antimicrobial peptide"/>
    <property type="evidence" value="ECO:0000318"/>
    <property type="project" value="GO_Central"/>
</dbReference>
<dbReference type="GO" id="GO:0071222">
    <property type="term" value="P:cellular response to lipopolysaccharide"/>
    <property type="evidence" value="ECO:0000318"/>
    <property type="project" value="GO_Central"/>
</dbReference>
<dbReference type="GO" id="GO:0006954">
    <property type="term" value="P:inflammatory response"/>
    <property type="evidence" value="ECO:0000318"/>
    <property type="project" value="GO_Central"/>
</dbReference>
<dbReference type="GO" id="GO:0030593">
    <property type="term" value="P:neutrophil chemotaxis"/>
    <property type="evidence" value="ECO:0000250"/>
    <property type="project" value="UniProtKB"/>
</dbReference>
<dbReference type="CDD" id="cd00273">
    <property type="entry name" value="Chemokine_CXC"/>
    <property type="match status" value="1"/>
</dbReference>
<dbReference type="FunFam" id="2.40.50.40:FF:000004">
    <property type="entry name" value="C-X-C motif chemokine"/>
    <property type="match status" value="1"/>
</dbReference>
<dbReference type="Gene3D" id="2.40.50.40">
    <property type="match status" value="1"/>
</dbReference>
<dbReference type="InterPro" id="IPR039809">
    <property type="entry name" value="Chemokine_b/g/d"/>
</dbReference>
<dbReference type="InterPro" id="IPR001089">
    <property type="entry name" value="Chemokine_CXC"/>
</dbReference>
<dbReference type="InterPro" id="IPR018048">
    <property type="entry name" value="Chemokine_CXC_CS"/>
</dbReference>
<dbReference type="InterPro" id="IPR001811">
    <property type="entry name" value="Chemokine_IL8-like_dom"/>
</dbReference>
<dbReference type="InterPro" id="IPR033899">
    <property type="entry name" value="CXC_Chemokine_domain"/>
</dbReference>
<dbReference type="InterPro" id="IPR036048">
    <property type="entry name" value="Interleukin_8-like_sf"/>
</dbReference>
<dbReference type="PANTHER" id="PTHR12015:SF200">
    <property type="entry name" value="INTERLEUKIN-8"/>
    <property type="match status" value="1"/>
</dbReference>
<dbReference type="PANTHER" id="PTHR12015">
    <property type="entry name" value="SMALL INDUCIBLE CYTOKINE A"/>
    <property type="match status" value="1"/>
</dbReference>
<dbReference type="Pfam" id="PF00048">
    <property type="entry name" value="IL8"/>
    <property type="match status" value="1"/>
</dbReference>
<dbReference type="PRINTS" id="PR00436">
    <property type="entry name" value="INTERLEUKIN8"/>
</dbReference>
<dbReference type="PRINTS" id="PR00437">
    <property type="entry name" value="SMALLCYTKCXC"/>
</dbReference>
<dbReference type="SMART" id="SM00199">
    <property type="entry name" value="SCY"/>
    <property type="match status" value="1"/>
</dbReference>
<dbReference type="SUPFAM" id="SSF54117">
    <property type="entry name" value="Interleukin 8-like chemokines"/>
    <property type="match status" value="1"/>
</dbReference>
<dbReference type="PROSITE" id="PS00471">
    <property type="entry name" value="SMALL_CYTOKINES_CXC"/>
    <property type="match status" value="1"/>
</dbReference>
<sequence>MTSKLAVALLAAFVLSAALCEAAVLSRVSSELRCQCIKTHSTPFHPKYIKELRVIDSGPHCENSEIIVKLFNGNEVCLDPKEKWVQKVVQIFLKKAEKQDP</sequence>
<reference key="1">
    <citation type="journal article" date="1993" name="Gene">
        <title>Cloning of a canine gene homologous to the human interleukin-8-encoding gene.</title>
        <authorList>
            <person name="Ishikawa J."/>
            <person name="Suzuki S."/>
            <person name="Hotta K."/>
            <person name="Hirota Y."/>
            <person name="Mizuno S."/>
            <person name="Suzuki K."/>
        </authorList>
    </citation>
    <scope>NUCLEOTIDE SEQUENCE [GENOMIC DNA]</scope>
</reference>
<reference key="2">
    <citation type="journal article" date="1994" name="Cytokine">
        <title>Molecular cloning and expression of canine interleukin 8 cDNA.</title>
        <authorList>
            <person name="Matsumoto Y."/>
            <person name="Mohamed A."/>
            <person name="Onodera T."/>
            <person name="Kato H."/>
            <person name="Ohashi T."/>
            <person name="Goitsuka R."/>
            <person name="Tsujimoto H."/>
            <person name="Hasegawa A."/>
            <person name="Furusawa S."/>
            <person name="Yoshihara K."/>
            <person name="Ishikawa J."/>
            <person name="Hotta K."/>
            <person name="Suzuki K."/>
            <person name="Hirota Y."/>
        </authorList>
    </citation>
    <scope>NUCLEOTIDE SEQUENCE [MRNA]</scope>
    <source>
        <tissue>Lymph node</tissue>
    </source>
</reference>
<reference key="3">
    <citation type="journal article" date="1995" name="J. Clin. Invest.">
        <title>Interleukin-8 gene induction in the myocardium after ischemia and reperfusion in vivo.</title>
        <authorList>
            <person name="Kukielka G.L."/>
            <person name="Smith W.C."/>
            <person name="Larosa G.J."/>
            <person name="Manning A.M."/>
            <person name="Mendoza L.H."/>
            <person name="Daly T.J."/>
            <person name="Hughes B.J."/>
            <person name="Youker K.A."/>
            <person name="Hawkins H.K."/>
            <person name="Michael L.H."/>
            <person name="Rot A."/>
            <person name="Entman M.L."/>
        </authorList>
    </citation>
    <scope>NUCLEOTIDE SEQUENCE [MRNA]</scope>
    <source>
        <strain>Mongrel</strain>
        <tissue>Jugular vein</tissue>
    </source>
</reference>
<reference key="4">
    <citation type="journal article" date="1997" name="Infect. Immun.">
        <title>Borrelia burgdorferi migrates into joint capsules and causes an up-regulation of interleukin-8 in synovial membranes of dogs experimentally infected with ticks.</title>
        <authorList>
            <person name="Straubinger R.K."/>
            <person name="Straubinger A.F."/>
            <person name="Harter L."/>
            <person name="Jacobson R.H."/>
            <person name="Chang Y.-F."/>
            <person name="Summers B.A."/>
            <person name="Erb H.N."/>
            <person name="Appel M.J."/>
        </authorList>
    </citation>
    <scope>NUCLEOTIDE SEQUENCE [MRNA]</scope>
    <source>
        <strain>Beagle</strain>
    </source>
</reference>
<gene>
    <name type="primary">CXCL8</name>
    <name type="synonym">IL8</name>
</gene>